<feature type="chain" id="PRO_0000092611" description="ATP-dependent lipid A-core flippase">
    <location>
        <begin position="1"/>
        <end position="582"/>
    </location>
</feature>
<feature type="transmembrane region" description="Helical" evidence="1">
    <location>
        <begin position="25"/>
        <end position="45"/>
    </location>
</feature>
<feature type="transmembrane region" description="Helical" evidence="1">
    <location>
        <begin position="69"/>
        <end position="89"/>
    </location>
</feature>
<feature type="transmembrane region" description="Helical" evidence="1">
    <location>
        <begin position="137"/>
        <end position="159"/>
    </location>
</feature>
<feature type="transmembrane region" description="Helical" evidence="1">
    <location>
        <begin position="253"/>
        <end position="273"/>
    </location>
</feature>
<feature type="transmembrane region" description="Helical" evidence="1">
    <location>
        <begin position="275"/>
        <end position="295"/>
    </location>
</feature>
<feature type="domain" description="ABC transmembrane type-1" evidence="1">
    <location>
        <begin position="28"/>
        <end position="310"/>
    </location>
</feature>
<feature type="domain" description="ABC transporter" evidence="1">
    <location>
        <begin position="342"/>
        <end position="578"/>
    </location>
</feature>
<feature type="binding site" evidence="1">
    <location>
        <begin position="376"/>
        <end position="383"/>
    </location>
    <ligand>
        <name>ATP</name>
        <dbReference type="ChEBI" id="CHEBI:30616"/>
    </ligand>
</feature>
<accession>Q66CI3</accession>
<evidence type="ECO:0000255" key="1">
    <source>
        <dbReference type="HAMAP-Rule" id="MF_01703"/>
    </source>
</evidence>
<keyword id="KW-0067">ATP-binding</keyword>
<keyword id="KW-0997">Cell inner membrane</keyword>
<keyword id="KW-1003">Cell membrane</keyword>
<keyword id="KW-0445">Lipid transport</keyword>
<keyword id="KW-0472">Membrane</keyword>
<keyword id="KW-0547">Nucleotide-binding</keyword>
<keyword id="KW-1278">Translocase</keyword>
<keyword id="KW-0812">Transmembrane</keyword>
<keyword id="KW-1133">Transmembrane helix</keyword>
<keyword id="KW-0813">Transport</keyword>
<protein>
    <recommendedName>
        <fullName evidence="1">ATP-dependent lipid A-core flippase</fullName>
        <ecNumber evidence="1">7.5.2.6</ecNumber>
    </recommendedName>
    <alternativeName>
        <fullName evidence="1">Lipid A export ATP-binding/permease protein MsbA</fullName>
    </alternativeName>
</protein>
<comment type="function">
    <text evidence="1">Involved in lipopolysaccharide (LPS) biosynthesis. Translocates lipid A-core from the inner to the outer leaflet of the inner membrane. Transmembrane domains (TMD) form a pore in the inner membrane and the ATP-binding domain (NBD) is responsible for energy generation.</text>
</comment>
<comment type="catalytic activity">
    <reaction evidence="1">
        <text>ATP + H2O + lipid A-core oligosaccharideSide 1 = ADP + phosphate + lipid A-core oligosaccharideSide 2.</text>
        <dbReference type="EC" id="7.5.2.6"/>
    </reaction>
</comment>
<comment type="subunit">
    <text evidence="1">Homodimer.</text>
</comment>
<comment type="subcellular location">
    <subcellularLocation>
        <location evidence="1">Cell inner membrane</location>
        <topology evidence="1">Multi-pass membrane protein</topology>
    </subcellularLocation>
</comment>
<comment type="domain">
    <text evidence="1">In MsbA the ATP-binding domain (NBD) and the transmembrane domain (TMD) are fused.</text>
</comment>
<comment type="similarity">
    <text evidence="1">Belongs to the ABC transporter superfamily. Lipid exporter (TC 3.A.1.106) family.</text>
</comment>
<reference key="1">
    <citation type="journal article" date="2004" name="Proc. Natl. Acad. Sci. U.S.A.">
        <title>Insights into the evolution of Yersinia pestis through whole-genome comparison with Yersinia pseudotuberculosis.</title>
        <authorList>
            <person name="Chain P.S.G."/>
            <person name="Carniel E."/>
            <person name="Larimer F.W."/>
            <person name="Lamerdin J."/>
            <person name="Stoutland P.O."/>
            <person name="Regala W.M."/>
            <person name="Georgescu A.M."/>
            <person name="Vergez L.M."/>
            <person name="Land M.L."/>
            <person name="Motin V.L."/>
            <person name="Brubaker R.R."/>
            <person name="Fowler J."/>
            <person name="Hinnebusch J."/>
            <person name="Marceau M."/>
            <person name="Medigue C."/>
            <person name="Simonet M."/>
            <person name="Chenal-Francisque V."/>
            <person name="Souza B."/>
            <person name="Dacheux D."/>
            <person name="Elliott J.M."/>
            <person name="Derbise A."/>
            <person name="Hauser L.J."/>
            <person name="Garcia E."/>
        </authorList>
    </citation>
    <scope>NUCLEOTIDE SEQUENCE [LARGE SCALE GENOMIC DNA]</scope>
    <source>
        <strain>IP32953</strain>
    </source>
</reference>
<sequence length="582" mass="64462">MMNDKDLSTWQTFRRLWPTISPYKAGLIVAAIALILNAASDTFMLSLLKPLLDDGFGNSNSSILKWMPLAVIGLMVVRGVTGFVSSYCISWVSGKVVMHIRRRLFSHMMGMPVSFFDQQSTGTLLSRITYDSEQVAASSSSALVTVVREGASIIGLFIMMFYYSWQLSLILIVIAPIVSISIRLVSKRFRNISKNMQNTMGEVTTSAEQMLKGHKEVLIFGGQKVETERFDAVSNRMRQQGMKLVSASSISDPIIQLIASFALALVLYAASFPSVMETLTAGTITVVFSAMIALMRPLKSLTNVNTQFQRGMAACQTLFSILDMEQEKDEGKLEVERAKGDIEFRHVTFYYPGKDTPALNDINIHLEAGKTVALVGRSGSGKSTIANLLTRFYDVSEGSILLDGHDLRDYRLGALRNQVALVSQNVHLFNDTVANNIAYARNEQYSRAEIEEAARMAYAMDFINKMEHGLDTVIGENGIMLSGGQRQRIAIARALLRNCPILILDEATSALDTESERAIQAALDELQKNRTSLVIAHRLSTIEKADEIVVIEDGRIVERGVHAELLVQQGVYAQLNRMQFGQ</sequence>
<organism>
    <name type="scientific">Yersinia pseudotuberculosis serotype I (strain IP32953)</name>
    <dbReference type="NCBI Taxonomy" id="273123"/>
    <lineage>
        <taxon>Bacteria</taxon>
        <taxon>Pseudomonadati</taxon>
        <taxon>Pseudomonadota</taxon>
        <taxon>Gammaproteobacteria</taxon>
        <taxon>Enterobacterales</taxon>
        <taxon>Yersiniaceae</taxon>
        <taxon>Yersinia</taxon>
    </lineage>
</organism>
<name>MSBA_YERPS</name>
<gene>
    <name evidence="1" type="primary">msbA</name>
    <name type="ordered locus">YPTB1420</name>
</gene>
<proteinExistence type="inferred from homology"/>
<dbReference type="EC" id="7.5.2.6" evidence="1"/>
<dbReference type="EMBL" id="BX936398">
    <property type="protein sequence ID" value="CAH20660.1"/>
    <property type="molecule type" value="Genomic_DNA"/>
</dbReference>
<dbReference type="RefSeq" id="WP_002211320.1">
    <property type="nucleotide sequence ID" value="NZ_CP009712.1"/>
</dbReference>
<dbReference type="SMR" id="Q66CI3"/>
<dbReference type="GeneID" id="57977191"/>
<dbReference type="KEGG" id="ypo:BZ17_1097"/>
<dbReference type="KEGG" id="yps:YPTB1420"/>
<dbReference type="PATRIC" id="fig|273123.14.peg.1165"/>
<dbReference type="Proteomes" id="UP000001011">
    <property type="component" value="Chromosome"/>
</dbReference>
<dbReference type="GO" id="GO:0005886">
    <property type="term" value="C:plasma membrane"/>
    <property type="evidence" value="ECO:0007669"/>
    <property type="project" value="UniProtKB-SubCell"/>
</dbReference>
<dbReference type="GO" id="GO:0015421">
    <property type="term" value="F:ABC-type oligopeptide transporter activity"/>
    <property type="evidence" value="ECO:0007669"/>
    <property type="project" value="TreeGrafter"/>
</dbReference>
<dbReference type="GO" id="GO:0005524">
    <property type="term" value="F:ATP binding"/>
    <property type="evidence" value="ECO:0007669"/>
    <property type="project" value="UniProtKB-KW"/>
</dbReference>
<dbReference type="GO" id="GO:0016887">
    <property type="term" value="F:ATP hydrolysis activity"/>
    <property type="evidence" value="ECO:0007669"/>
    <property type="project" value="InterPro"/>
</dbReference>
<dbReference type="GO" id="GO:0034040">
    <property type="term" value="F:ATPase-coupled lipid transmembrane transporter activity"/>
    <property type="evidence" value="ECO:0007669"/>
    <property type="project" value="InterPro"/>
</dbReference>
<dbReference type="CDD" id="cd18552">
    <property type="entry name" value="ABC_6TM_MsbA_like"/>
    <property type="match status" value="1"/>
</dbReference>
<dbReference type="CDD" id="cd03251">
    <property type="entry name" value="ABCC_MsbA"/>
    <property type="match status" value="1"/>
</dbReference>
<dbReference type="FunFam" id="1.20.1560.10:FF:000008">
    <property type="entry name" value="Lipid A export ATP-binding/permease protein MsbA"/>
    <property type="match status" value="1"/>
</dbReference>
<dbReference type="FunFam" id="3.40.50.300:FF:000140">
    <property type="entry name" value="Lipid A export ATP-binding/permease protein MsbA"/>
    <property type="match status" value="1"/>
</dbReference>
<dbReference type="Gene3D" id="1.20.1560.10">
    <property type="entry name" value="ABC transporter type 1, transmembrane domain"/>
    <property type="match status" value="1"/>
</dbReference>
<dbReference type="Gene3D" id="3.40.50.300">
    <property type="entry name" value="P-loop containing nucleotide triphosphate hydrolases"/>
    <property type="match status" value="1"/>
</dbReference>
<dbReference type="InterPro" id="IPR003593">
    <property type="entry name" value="AAA+_ATPase"/>
</dbReference>
<dbReference type="InterPro" id="IPR011527">
    <property type="entry name" value="ABC1_TM_dom"/>
</dbReference>
<dbReference type="InterPro" id="IPR036640">
    <property type="entry name" value="ABC1_TM_sf"/>
</dbReference>
<dbReference type="InterPro" id="IPR003439">
    <property type="entry name" value="ABC_transporter-like_ATP-bd"/>
</dbReference>
<dbReference type="InterPro" id="IPR017871">
    <property type="entry name" value="ABC_transporter-like_CS"/>
</dbReference>
<dbReference type="InterPro" id="IPR011917">
    <property type="entry name" value="ABC_transpr_lipidA"/>
</dbReference>
<dbReference type="InterPro" id="IPR027417">
    <property type="entry name" value="P-loop_NTPase"/>
</dbReference>
<dbReference type="InterPro" id="IPR039421">
    <property type="entry name" value="Type_1_exporter"/>
</dbReference>
<dbReference type="NCBIfam" id="TIGR02203">
    <property type="entry name" value="MsbA_lipidA"/>
    <property type="match status" value="1"/>
</dbReference>
<dbReference type="NCBIfam" id="NF008381">
    <property type="entry name" value="PRK11176.1"/>
    <property type="match status" value="1"/>
</dbReference>
<dbReference type="PANTHER" id="PTHR43394:SF1">
    <property type="entry name" value="ATP-BINDING CASSETTE SUB-FAMILY B MEMBER 10, MITOCHONDRIAL"/>
    <property type="match status" value="1"/>
</dbReference>
<dbReference type="PANTHER" id="PTHR43394">
    <property type="entry name" value="ATP-DEPENDENT PERMEASE MDL1, MITOCHONDRIAL"/>
    <property type="match status" value="1"/>
</dbReference>
<dbReference type="Pfam" id="PF00664">
    <property type="entry name" value="ABC_membrane"/>
    <property type="match status" value="1"/>
</dbReference>
<dbReference type="Pfam" id="PF00005">
    <property type="entry name" value="ABC_tran"/>
    <property type="match status" value="1"/>
</dbReference>
<dbReference type="SMART" id="SM00382">
    <property type="entry name" value="AAA"/>
    <property type="match status" value="1"/>
</dbReference>
<dbReference type="SUPFAM" id="SSF90123">
    <property type="entry name" value="ABC transporter transmembrane region"/>
    <property type="match status" value="1"/>
</dbReference>
<dbReference type="SUPFAM" id="SSF52540">
    <property type="entry name" value="P-loop containing nucleoside triphosphate hydrolases"/>
    <property type="match status" value="1"/>
</dbReference>
<dbReference type="PROSITE" id="PS50929">
    <property type="entry name" value="ABC_TM1F"/>
    <property type="match status" value="1"/>
</dbReference>
<dbReference type="PROSITE" id="PS00211">
    <property type="entry name" value="ABC_TRANSPORTER_1"/>
    <property type="match status" value="1"/>
</dbReference>
<dbReference type="PROSITE" id="PS50893">
    <property type="entry name" value="ABC_TRANSPORTER_2"/>
    <property type="match status" value="1"/>
</dbReference>
<dbReference type="PROSITE" id="PS51239">
    <property type="entry name" value="MSBA"/>
    <property type="match status" value="1"/>
</dbReference>